<feature type="chain" id="PRO_0000238945" description="Potassium channel regulatory protein">
    <location>
        <begin position="1"/>
        <end position="272"/>
    </location>
</feature>
<feature type="domain" description="BTB">
    <location>
        <begin position="5"/>
        <end position="106"/>
    </location>
</feature>
<feature type="splice variant" id="VSP_019018" description="In isoform 2." evidence="3 4 5">
    <original>YVSIKPDNRKLANGTNVLGLLIDTLLKEGFHLVSTR</original>
    <variation>LVCNGVISAHHNLRLWGSSDSPASASRVAGITGMFL</variation>
    <location>
        <begin position="194"/>
        <end position="229"/>
    </location>
</feature>
<feature type="splice variant" id="VSP_019021" description="In isoform 2." evidence="3 4 5">
    <location>
        <begin position="230"/>
        <end position="272"/>
    </location>
</feature>
<keyword id="KW-0025">Alternative splicing</keyword>
<keyword id="KW-0256">Endoplasmic reticulum</keyword>
<keyword id="KW-1267">Proteomics identification</keyword>
<keyword id="KW-1185">Reference proteome</keyword>
<comment type="function">
    <text evidence="1 2">Inhibits potassium fluxes in cells. May regulate Kv1 family channel proteins by retaining a fraction of channels in endomembranes.</text>
</comment>
<comment type="subunit">
    <text evidence="2">Can form homooligomers. Interacts with KCNA1 (via cytoplasmic N-terminal domain) and KCNA4.</text>
</comment>
<comment type="interaction">
    <interactant intactId="EBI-745755">
        <id>Q8N5I3</id>
    </interactant>
    <interactant intactId="EBI-745755">
        <id>Q8N5I3</id>
        <label>KCNRG</label>
    </interactant>
    <organismsDiffer>false</organismsDiffer>
    <experiments>7</experiments>
</comment>
<comment type="interaction">
    <interactant intactId="EBI-745755">
        <id>Q8N5I3</id>
    </interactant>
    <interactant intactId="EBI-21545735">
        <id>A6NLU0</id>
        <label>RFPL4A</label>
    </interactant>
    <organismsDiffer>false</organismsDiffer>
    <experiments>3</experiments>
</comment>
<comment type="subcellular location">
    <subcellularLocation>
        <location evidence="2">Endoplasmic reticulum</location>
    </subcellularLocation>
</comment>
<comment type="alternative products">
    <event type="alternative splicing"/>
    <isoform>
        <id>Q8N5I3-1</id>
        <name>1</name>
        <name>B</name>
        <sequence type="displayed"/>
    </isoform>
    <isoform>
        <id>Q8N5I3-2</id>
        <name>2</name>
        <name>A</name>
        <sequence type="described" ref="VSP_019018 VSP_019021"/>
    </isoform>
</comment>
<comment type="tissue specificity">
    <text evidence="1">Ubiquitous in normal tissues and expressed in some tumor tissues.</text>
</comment>
<organism>
    <name type="scientific">Homo sapiens</name>
    <name type="common">Human</name>
    <dbReference type="NCBI Taxonomy" id="9606"/>
    <lineage>
        <taxon>Eukaryota</taxon>
        <taxon>Metazoa</taxon>
        <taxon>Chordata</taxon>
        <taxon>Craniata</taxon>
        <taxon>Vertebrata</taxon>
        <taxon>Euteleostomi</taxon>
        <taxon>Mammalia</taxon>
        <taxon>Eutheria</taxon>
        <taxon>Euarchontoglires</taxon>
        <taxon>Primates</taxon>
        <taxon>Haplorrhini</taxon>
        <taxon>Catarrhini</taxon>
        <taxon>Hominidae</taxon>
        <taxon>Homo</taxon>
    </lineage>
</organism>
<reference key="1">
    <citation type="journal article" date="2003" name="FEBS Lett.">
        <title>A new human gene KCNRG encoding potassium channel regulating protein is a cancer suppressor gene candidate located in 13q14.3.</title>
        <authorList>
            <person name="Ivanov D.V."/>
            <person name="Tyazhelova T.V."/>
            <person name="Lemonnier L."/>
            <person name="Kononenko N."/>
            <person name="Pestova A.A."/>
            <person name="Nikitin E.A."/>
            <person name="Prevarskaya N."/>
            <person name="Skryma R."/>
            <person name="Panchin Y.V."/>
            <person name="Yankovsky N.K."/>
            <person name="Baranova A.V."/>
        </authorList>
    </citation>
    <scope>NUCLEOTIDE SEQUENCE [MRNA] (ISOFORMS 1 AND 2)</scope>
    <scope>TISSUE SPECIFICITY</scope>
    <scope>FUNCTION</scope>
</reference>
<reference key="2">
    <citation type="submission" date="2002-12" db="EMBL/GenBank/DDBJ databases">
        <title>Cloning of spliced CLLD4 gene transcripts.</title>
        <authorList>
            <person name="Skoldberg F."/>
            <person name="Alimohammadi M."/>
            <person name="Hedstrand H."/>
            <person name="Kampe O."/>
        </authorList>
    </citation>
    <scope>NUCLEOTIDE SEQUENCE [MRNA] (ISOFORMS 1 AND 2)</scope>
    <source>
        <tissue>Lung</tissue>
    </source>
</reference>
<reference key="3">
    <citation type="journal article" date="2004" name="Nature">
        <title>The DNA sequence and analysis of human chromosome 13.</title>
        <authorList>
            <person name="Dunham A."/>
            <person name="Matthews L.H."/>
            <person name="Burton J."/>
            <person name="Ashurst J.L."/>
            <person name="Howe K.L."/>
            <person name="Ashcroft K.J."/>
            <person name="Beare D.M."/>
            <person name="Burford D.C."/>
            <person name="Hunt S.E."/>
            <person name="Griffiths-Jones S."/>
            <person name="Jones M.C."/>
            <person name="Keenan S.J."/>
            <person name="Oliver K."/>
            <person name="Scott C.E."/>
            <person name="Ainscough R."/>
            <person name="Almeida J.P."/>
            <person name="Ambrose K.D."/>
            <person name="Andrews D.T."/>
            <person name="Ashwell R.I.S."/>
            <person name="Babbage A.K."/>
            <person name="Bagguley C.L."/>
            <person name="Bailey J."/>
            <person name="Bannerjee R."/>
            <person name="Barlow K.F."/>
            <person name="Bates K."/>
            <person name="Beasley H."/>
            <person name="Bird C.P."/>
            <person name="Bray-Allen S."/>
            <person name="Brown A.J."/>
            <person name="Brown J.Y."/>
            <person name="Burrill W."/>
            <person name="Carder C."/>
            <person name="Carter N.P."/>
            <person name="Chapman J.C."/>
            <person name="Clamp M.E."/>
            <person name="Clark S.Y."/>
            <person name="Clarke G."/>
            <person name="Clee C.M."/>
            <person name="Clegg S.C."/>
            <person name="Cobley V."/>
            <person name="Collins J.E."/>
            <person name="Corby N."/>
            <person name="Coville G.J."/>
            <person name="Deloukas P."/>
            <person name="Dhami P."/>
            <person name="Dunham I."/>
            <person name="Dunn M."/>
            <person name="Earthrowl M.E."/>
            <person name="Ellington A.G."/>
            <person name="Faulkner L."/>
            <person name="Frankish A.G."/>
            <person name="Frankland J."/>
            <person name="French L."/>
            <person name="Garner P."/>
            <person name="Garnett J."/>
            <person name="Gilbert J.G.R."/>
            <person name="Gilson C.J."/>
            <person name="Ghori J."/>
            <person name="Grafham D.V."/>
            <person name="Gribble S.M."/>
            <person name="Griffiths C."/>
            <person name="Hall R.E."/>
            <person name="Hammond S."/>
            <person name="Harley J.L."/>
            <person name="Hart E.A."/>
            <person name="Heath P.D."/>
            <person name="Howden P.J."/>
            <person name="Huckle E.J."/>
            <person name="Hunt P.J."/>
            <person name="Hunt A.R."/>
            <person name="Johnson C."/>
            <person name="Johnson D."/>
            <person name="Kay M."/>
            <person name="Kimberley A.M."/>
            <person name="King A."/>
            <person name="Laird G.K."/>
            <person name="Langford C.J."/>
            <person name="Lawlor S."/>
            <person name="Leongamornlert D.A."/>
            <person name="Lloyd D.M."/>
            <person name="Lloyd C."/>
            <person name="Loveland J.E."/>
            <person name="Lovell J."/>
            <person name="Martin S."/>
            <person name="Mashreghi-Mohammadi M."/>
            <person name="McLaren S.J."/>
            <person name="McMurray A."/>
            <person name="Milne S."/>
            <person name="Moore M.J.F."/>
            <person name="Nickerson T."/>
            <person name="Palmer S.A."/>
            <person name="Pearce A.V."/>
            <person name="Peck A.I."/>
            <person name="Pelan S."/>
            <person name="Phillimore B."/>
            <person name="Porter K.M."/>
            <person name="Rice C.M."/>
            <person name="Searle S."/>
            <person name="Sehra H.K."/>
            <person name="Shownkeen R."/>
            <person name="Skuce C.D."/>
            <person name="Smith M."/>
            <person name="Steward C.A."/>
            <person name="Sycamore N."/>
            <person name="Tester J."/>
            <person name="Thomas D.W."/>
            <person name="Tracey A."/>
            <person name="Tromans A."/>
            <person name="Tubby B."/>
            <person name="Wall M."/>
            <person name="Wallis J.M."/>
            <person name="West A.P."/>
            <person name="Whitehead S.L."/>
            <person name="Willey D.L."/>
            <person name="Wilming L."/>
            <person name="Wray P.W."/>
            <person name="Wright M.W."/>
            <person name="Young L."/>
            <person name="Coulson A."/>
            <person name="Durbin R.M."/>
            <person name="Hubbard T."/>
            <person name="Sulston J.E."/>
            <person name="Beck S."/>
            <person name="Bentley D.R."/>
            <person name="Rogers J."/>
            <person name="Ross M.T."/>
        </authorList>
    </citation>
    <scope>NUCLEOTIDE SEQUENCE [LARGE SCALE GENOMIC DNA]</scope>
</reference>
<reference key="4">
    <citation type="submission" date="2005-07" db="EMBL/GenBank/DDBJ databases">
        <authorList>
            <person name="Mural R.J."/>
            <person name="Istrail S."/>
            <person name="Sutton G.G."/>
            <person name="Florea L."/>
            <person name="Halpern A.L."/>
            <person name="Mobarry C.M."/>
            <person name="Lippert R."/>
            <person name="Walenz B."/>
            <person name="Shatkay H."/>
            <person name="Dew I."/>
            <person name="Miller J.R."/>
            <person name="Flanigan M.J."/>
            <person name="Edwards N.J."/>
            <person name="Bolanos R."/>
            <person name="Fasulo D."/>
            <person name="Halldorsson B.V."/>
            <person name="Hannenhalli S."/>
            <person name="Turner R."/>
            <person name="Yooseph S."/>
            <person name="Lu F."/>
            <person name="Nusskern D.R."/>
            <person name="Shue B.C."/>
            <person name="Zheng X.H."/>
            <person name="Zhong F."/>
            <person name="Delcher A.L."/>
            <person name="Huson D.H."/>
            <person name="Kravitz S.A."/>
            <person name="Mouchard L."/>
            <person name="Reinert K."/>
            <person name="Remington K.A."/>
            <person name="Clark A.G."/>
            <person name="Waterman M.S."/>
            <person name="Eichler E.E."/>
            <person name="Adams M.D."/>
            <person name="Hunkapiller M.W."/>
            <person name="Myers E.W."/>
            <person name="Venter J.C."/>
        </authorList>
    </citation>
    <scope>NUCLEOTIDE SEQUENCE [LARGE SCALE GENOMIC DNA]</scope>
</reference>
<reference key="5">
    <citation type="journal article" date="2004" name="Genome Res.">
        <title>The status, quality, and expansion of the NIH full-length cDNA project: the Mammalian Gene Collection (MGC).</title>
        <authorList>
            <consortium name="The MGC Project Team"/>
        </authorList>
    </citation>
    <scope>NUCLEOTIDE SEQUENCE [LARGE SCALE MRNA] (ISOFORMS 1 AND 2)</scope>
    <source>
        <tissue>Lung</tissue>
    </source>
</reference>
<reference key="6">
    <citation type="journal article" date="2010" name="Biochem. Biophys. Res. Commun.">
        <title>Potassium channel regulator KCNRG regulates surface expression of Shaker-type potassium channels.</title>
        <authorList>
            <person name="Usman H."/>
            <person name="Mathew M.K."/>
        </authorList>
    </citation>
    <scope>FUNCTION</scope>
    <scope>SUBCELLULAR LOCATION</scope>
    <scope>SUBUNIT</scope>
</reference>
<evidence type="ECO:0000269" key="1">
    <source>
    </source>
</evidence>
<evidence type="ECO:0000269" key="2">
    <source>
    </source>
</evidence>
<evidence type="ECO:0000303" key="3">
    <source>
    </source>
</evidence>
<evidence type="ECO:0000303" key="4">
    <source>
    </source>
</evidence>
<evidence type="ECO:0000303" key="5">
    <source ref="2"/>
</evidence>
<dbReference type="EMBL" id="AY129653">
    <property type="protein sequence ID" value="AAN06090.1"/>
    <property type="molecule type" value="mRNA"/>
</dbReference>
<dbReference type="EMBL" id="AY129654">
    <property type="protein sequence ID" value="AAN06091.1"/>
    <property type="molecule type" value="mRNA"/>
</dbReference>
<dbReference type="EMBL" id="AY169387">
    <property type="protein sequence ID" value="AAO11777.1"/>
    <property type="molecule type" value="mRNA"/>
</dbReference>
<dbReference type="EMBL" id="AY169388">
    <property type="protein sequence ID" value="AAO11778.1"/>
    <property type="molecule type" value="mRNA"/>
</dbReference>
<dbReference type="EMBL" id="AY190921">
    <property type="protein sequence ID" value="AAO27464.1"/>
    <property type="molecule type" value="mRNA"/>
</dbReference>
<dbReference type="EMBL" id="AY190922">
    <property type="protein sequence ID" value="AAO27465.1"/>
    <property type="molecule type" value="mRNA"/>
</dbReference>
<dbReference type="EMBL" id="AL137060">
    <property type="status" value="NOT_ANNOTATED_CDS"/>
    <property type="molecule type" value="Genomic_DNA"/>
</dbReference>
<dbReference type="EMBL" id="CH471075">
    <property type="protein sequence ID" value="EAX08849.1"/>
    <property type="molecule type" value="Genomic_DNA"/>
</dbReference>
<dbReference type="EMBL" id="CH471075">
    <property type="protein sequence ID" value="EAX08850.1"/>
    <property type="molecule type" value="Genomic_DNA"/>
</dbReference>
<dbReference type="EMBL" id="BC020887">
    <property type="protein sequence ID" value="AAH20887.1"/>
    <property type="molecule type" value="mRNA"/>
</dbReference>
<dbReference type="EMBL" id="BC032343">
    <property type="protein sequence ID" value="AAH32343.1"/>
    <property type="molecule type" value="mRNA"/>
</dbReference>
<dbReference type="CCDS" id="CCDS41889.1">
    <molecule id="Q8N5I3-2"/>
</dbReference>
<dbReference type="CCDS" id="CCDS9424.1">
    <molecule id="Q8N5I3-1"/>
</dbReference>
<dbReference type="RefSeq" id="NP_775876.1">
    <molecule id="Q8N5I3-1"/>
    <property type="nucleotide sequence ID" value="NM_173605.2"/>
</dbReference>
<dbReference type="RefSeq" id="NP_955751.1">
    <molecule id="Q8N5I3-2"/>
    <property type="nucleotide sequence ID" value="NM_199464.3"/>
</dbReference>
<dbReference type="SMR" id="Q8N5I3"/>
<dbReference type="BioGRID" id="129592">
    <property type="interactions" value="11"/>
</dbReference>
<dbReference type="FunCoup" id="Q8N5I3">
    <property type="interactions" value="9"/>
</dbReference>
<dbReference type="IntAct" id="Q8N5I3">
    <property type="interactions" value="11"/>
</dbReference>
<dbReference type="MINT" id="Q8N5I3"/>
<dbReference type="STRING" id="9606.ENSP00000324191"/>
<dbReference type="iPTMnet" id="Q8N5I3"/>
<dbReference type="PhosphoSitePlus" id="Q8N5I3"/>
<dbReference type="BioMuta" id="KCNRG"/>
<dbReference type="DMDM" id="74729005"/>
<dbReference type="jPOST" id="Q8N5I3"/>
<dbReference type="MassIVE" id="Q8N5I3"/>
<dbReference type="PaxDb" id="9606-ENSP00000324191"/>
<dbReference type="PeptideAtlas" id="Q8N5I3"/>
<dbReference type="ProteomicsDB" id="72061">
    <molecule id="Q8N5I3-2"/>
</dbReference>
<dbReference type="Antibodypedia" id="637">
    <property type="antibodies" value="132 antibodies from 21 providers"/>
</dbReference>
<dbReference type="DNASU" id="10206"/>
<dbReference type="Ensembl" id="ENST00000312942.2">
    <molecule id="Q8N5I3-1"/>
    <property type="protein sequence ID" value="ENSP00000324191.1"/>
    <property type="gene ID" value="ENSG00000198553.9"/>
</dbReference>
<dbReference type="Ensembl" id="ENST00000360473.8">
    <molecule id="Q8N5I3-2"/>
    <property type="protein sequence ID" value="ENSP00000353661.4"/>
    <property type="gene ID" value="ENSG00000198553.9"/>
</dbReference>
<dbReference type="GeneID" id="283518"/>
<dbReference type="KEGG" id="hsa:283518"/>
<dbReference type="MANE-Select" id="ENST00000312942.2">
    <property type="protein sequence ID" value="ENSP00000324191.1"/>
    <property type="RefSeq nucleotide sequence ID" value="NM_173605.2"/>
    <property type="RefSeq protein sequence ID" value="NP_775876.1"/>
</dbReference>
<dbReference type="UCSC" id="uc001vdt.4">
    <molecule id="Q8N5I3-1"/>
    <property type="organism name" value="human"/>
</dbReference>
<dbReference type="AGR" id="HGNC:18893"/>
<dbReference type="CTD" id="283518"/>
<dbReference type="DisGeNET" id="283518"/>
<dbReference type="GeneCards" id="KCNRG"/>
<dbReference type="HGNC" id="HGNC:18893">
    <property type="gene designation" value="KCNRG"/>
</dbReference>
<dbReference type="HPA" id="ENSG00000198553">
    <property type="expression patterns" value="Tissue enriched (fallopian)"/>
</dbReference>
<dbReference type="MIM" id="607947">
    <property type="type" value="gene"/>
</dbReference>
<dbReference type="neXtProt" id="NX_Q8N5I3"/>
<dbReference type="OpenTargets" id="ENSG00000198553"/>
<dbReference type="PharmGKB" id="PA134924183"/>
<dbReference type="VEuPathDB" id="HostDB:ENSG00000198553"/>
<dbReference type="eggNOG" id="KOG2723">
    <property type="taxonomic scope" value="Eukaryota"/>
</dbReference>
<dbReference type="GeneTree" id="ENSGT00940000161898"/>
<dbReference type="HOGENOM" id="CLU_087954_0_0_1"/>
<dbReference type="InParanoid" id="Q8N5I3"/>
<dbReference type="OMA" id="SYIMDFL"/>
<dbReference type="OrthoDB" id="10025005at2759"/>
<dbReference type="PAN-GO" id="Q8N5I3">
    <property type="GO annotations" value="2 GO annotations based on evolutionary models"/>
</dbReference>
<dbReference type="PhylomeDB" id="Q8N5I3"/>
<dbReference type="TreeFam" id="TF315332"/>
<dbReference type="PathwayCommons" id="Q8N5I3"/>
<dbReference type="SignaLink" id="Q8N5I3"/>
<dbReference type="BioGRID-ORCS" id="283518">
    <property type="hits" value="26 hits in 1149 CRISPR screens"/>
</dbReference>
<dbReference type="ChiTaRS" id="KCNRG">
    <property type="organism name" value="human"/>
</dbReference>
<dbReference type="GeneWiki" id="KCNRG"/>
<dbReference type="GenomeRNAi" id="283518"/>
<dbReference type="Pharos" id="Q8N5I3">
    <property type="development level" value="Tbio"/>
</dbReference>
<dbReference type="PRO" id="PR:Q8N5I3"/>
<dbReference type="Proteomes" id="UP000005640">
    <property type="component" value="Chromosome 13"/>
</dbReference>
<dbReference type="RNAct" id="Q8N5I3">
    <property type="molecule type" value="protein"/>
</dbReference>
<dbReference type="Bgee" id="ENSG00000198553">
    <property type="expression patterns" value="Expressed in right uterine tube and 105 other cell types or tissues"/>
</dbReference>
<dbReference type="GO" id="GO:0005783">
    <property type="term" value="C:endoplasmic reticulum"/>
    <property type="evidence" value="ECO:0000314"/>
    <property type="project" value="UniProtKB"/>
</dbReference>
<dbReference type="GO" id="GO:0042802">
    <property type="term" value="F:identical protein binding"/>
    <property type="evidence" value="ECO:0000353"/>
    <property type="project" value="IntAct"/>
</dbReference>
<dbReference type="GO" id="GO:1902260">
    <property type="term" value="P:negative regulation of delayed rectifier potassium channel activity"/>
    <property type="evidence" value="ECO:0000314"/>
    <property type="project" value="UniProtKB"/>
</dbReference>
<dbReference type="GO" id="GO:0051260">
    <property type="term" value="P:protein homooligomerization"/>
    <property type="evidence" value="ECO:0007669"/>
    <property type="project" value="InterPro"/>
</dbReference>
<dbReference type="FunFam" id="3.30.710.10:FF:000114">
    <property type="entry name" value="potassium channel regulatory protein"/>
    <property type="match status" value="1"/>
</dbReference>
<dbReference type="Gene3D" id="3.30.710.10">
    <property type="entry name" value="Potassium Channel Kv1.1, Chain A"/>
    <property type="match status" value="1"/>
</dbReference>
<dbReference type="InterPro" id="IPR000210">
    <property type="entry name" value="BTB/POZ_dom"/>
</dbReference>
<dbReference type="InterPro" id="IPR011333">
    <property type="entry name" value="SKP1/BTB/POZ_sf"/>
</dbReference>
<dbReference type="InterPro" id="IPR003131">
    <property type="entry name" value="T1-type_BTB"/>
</dbReference>
<dbReference type="PANTHER" id="PTHR14499:SF5">
    <property type="entry name" value="POTASSIUM CHANNEL REGULATORY PROTEIN"/>
    <property type="match status" value="1"/>
</dbReference>
<dbReference type="PANTHER" id="PTHR14499">
    <property type="entry name" value="POTASSIUM CHANNEL TETRAMERIZATION DOMAIN-CONTAINING"/>
    <property type="match status" value="1"/>
</dbReference>
<dbReference type="Pfam" id="PF02214">
    <property type="entry name" value="BTB_2"/>
    <property type="match status" value="1"/>
</dbReference>
<dbReference type="SMART" id="SM00225">
    <property type="entry name" value="BTB"/>
    <property type="match status" value="1"/>
</dbReference>
<dbReference type="SUPFAM" id="SSF54695">
    <property type="entry name" value="POZ domain"/>
    <property type="match status" value="1"/>
</dbReference>
<name>KCNRG_HUMAN</name>
<protein>
    <recommendedName>
        <fullName>Potassium channel regulatory protein</fullName>
        <shortName>Potassium channel regulator</shortName>
    </recommendedName>
    <alternativeName>
        <fullName>Protein CLLD4</fullName>
    </alternativeName>
</protein>
<gene>
    <name type="primary">KCNRG</name>
    <name type="synonym">CLLD4</name>
</gene>
<accession>Q8N5I3</accession>
<accession>A2A2X9</accession>
<accession>Q0P6D0</accession>
<accession>Q8IU75</accession>
<accession>Q8N3Q9</accession>
<sequence>MSSQELVTLNVGGKIFTTRFSTIKQFPASRLARMLDGRDQEFKMVGGQIFVDRDGDLFSFILDFLRTHQLLLPTEFSDYLRLQREALFYELRSLVDLLNPYLLQPRPALVEVHFLSRNTQAFFRVFGSCSKTIEMLTGRITVFTEQPSAPTWNGNFFPPQMTLLPLPPQRPSYHDLVFQCGSDSTTDNQTGVRYVSIKPDNRKLANGTNVLGLLIDTLLKEGFHLVSTRTVSSEDKTECYSFERIKSPEVLITNETPKPETIIIPEQSQIKK</sequence>
<proteinExistence type="evidence at protein level"/>